<organism>
    <name type="scientific">Xanthomonas euvesicatoria</name>
    <dbReference type="NCBI Taxonomy" id="456327"/>
    <lineage>
        <taxon>Bacteria</taxon>
        <taxon>Pseudomonadati</taxon>
        <taxon>Pseudomonadota</taxon>
        <taxon>Gammaproteobacteria</taxon>
        <taxon>Lysobacterales</taxon>
        <taxon>Lysobacteraceae</taxon>
        <taxon>Xanthomonas</taxon>
    </lineage>
</organism>
<feature type="chain" id="PRO_0000075530" description="Insertion element IS476 uncharacterized 39.2 kDa protein">
    <location>
        <begin position="1"/>
        <end position="346"/>
    </location>
</feature>
<feature type="domain" description="Integrase catalytic" evidence="1">
    <location>
        <begin position="169"/>
        <end position="329"/>
    </location>
</feature>
<feature type="region of interest" description="Disordered" evidence="2">
    <location>
        <begin position="1"/>
        <end position="50"/>
    </location>
</feature>
<feature type="compositionally biased region" description="Basic and acidic residues" evidence="2">
    <location>
        <begin position="29"/>
        <end position="39"/>
    </location>
</feature>
<protein>
    <recommendedName>
        <fullName>Insertion element IS476 uncharacterized 39.2 kDa protein</fullName>
    </recommendedName>
</protein>
<sequence length="346" mass="39235">MVSARPAFISGGPSTGGWRPTRQAAERTGGPEHSIEEVAGRGAPGHRSAEGWLRGKTLAPQRKREAIRRMLEHTPLSERRACRLAGLSRDAFRHAPVPTPATQALSARLVELAQTHRRFGYRRLHDLLRPEFPSVNHKKIYRLYEEAELKVRKRRKAKRPVGERQKLLASSMPNDTWSMDFVFDALANARRIKCLTVVDDFTRESVDIAVDHGISGAYVVRLLDQAACFRGYPRAVRTDNGPEFTSRAFIAWTQQHGIEHILIEPGAPTQNAYIESFNGKFRDECLNEHWFTSLAQARDVIADWRRHYNQIRPHSSCGRIPPAQFAANYRTQQANNAVPFNPGLYQ</sequence>
<name>YI61_XANEU</name>
<accession>P25438</accession>
<proteinExistence type="predicted"/>
<keyword id="KW-0814">Transposable element</keyword>
<evidence type="ECO:0000255" key="1">
    <source>
        <dbReference type="PROSITE-ProRule" id="PRU00457"/>
    </source>
</evidence>
<evidence type="ECO:0000256" key="2">
    <source>
        <dbReference type="SAM" id="MobiDB-lite"/>
    </source>
</evidence>
<dbReference type="EMBL" id="M28557">
    <property type="protein sequence ID" value="AAA98145.1"/>
    <property type="molecule type" value="Genomic_DNA"/>
</dbReference>
<dbReference type="SMR" id="P25438"/>
<dbReference type="GO" id="GO:0003676">
    <property type="term" value="F:nucleic acid binding"/>
    <property type="evidence" value="ECO:0007669"/>
    <property type="project" value="InterPro"/>
</dbReference>
<dbReference type="GO" id="GO:0015074">
    <property type="term" value="P:DNA integration"/>
    <property type="evidence" value="ECO:0007669"/>
    <property type="project" value="InterPro"/>
</dbReference>
<dbReference type="Gene3D" id="3.30.420.10">
    <property type="entry name" value="Ribonuclease H-like superfamily/Ribonuclease H"/>
    <property type="match status" value="1"/>
</dbReference>
<dbReference type="InterPro" id="IPR025948">
    <property type="entry name" value="HTH-like_dom"/>
</dbReference>
<dbReference type="InterPro" id="IPR001584">
    <property type="entry name" value="Integrase_cat-core"/>
</dbReference>
<dbReference type="InterPro" id="IPR012337">
    <property type="entry name" value="RNaseH-like_sf"/>
</dbReference>
<dbReference type="InterPro" id="IPR036397">
    <property type="entry name" value="RNaseH_sf"/>
</dbReference>
<dbReference type="InterPro" id="IPR048020">
    <property type="entry name" value="Transpos_IS3"/>
</dbReference>
<dbReference type="NCBIfam" id="NF033516">
    <property type="entry name" value="transpos_IS3"/>
    <property type="match status" value="1"/>
</dbReference>
<dbReference type="PANTHER" id="PTHR47515:SF1">
    <property type="entry name" value="BLR2054 PROTEIN"/>
    <property type="match status" value="1"/>
</dbReference>
<dbReference type="PANTHER" id="PTHR47515">
    <property type="entry name" value="LOW CALCIUM RESPONSE LOCUS PROTEIN T"/>
    <property type="match status" value="1"/>
</dbReference>
<dbReference type="Pfam" id="PF13276">
    <property type="entry name" value="HTH_21"/>
    <property type="match status" value="1"/>
</dbReference>
<dbReference type="Pfam" id="PF13683">
    <property type="entry name" value="rve_3"/>
    <property type="match status" value="1"/>
</dbReference>
<dbReference type="SUPFAM" id="SSF53098">
    <property type="entry name" value="Ribonuclease H-like"/>
    <property type="match status" value="1"/>
</dbReference>
<dbReference type="PROSITE" id="PS50994">
    <property type="entry name" value="INTEGRASE"/>
    <property type="match status" value="1"/>
</dbReference>
<reference key="1">
    <citation type="journal article" date="1990" name="J. Bacteriol.">
        <title>Characterization of IS476 and its role in bacterial spot disease of tomato and pepper.</title>
        <authorList>
            <person name="Kearney B."/>
            <person name="Staskawicz B.J."/>
        </authorList>
    </citation>
    <scope>NUCLEOTIDE SEQUENCE [GENOMIC DNA]</scope>
</reference>